<feature type="chain" id="PRO_0000444387" description="Nonribosomal peptide synthetase 6">
    <location>
        <begin position="1"/>
        <end position="1761"/>
    </location>
</feature>
<feature type="domain" description="Carrier 1" evidence="4">
    <location>
        <begin position="600"/>
        <end position="675"/>
    </location>
</feature>
<feature type="domain" description="Carrier 2" evidence="4">
    <location>
        <begin position="1169"/>
        <end position="1242"/>
    </location>
</feature>
<feature type="domain" description="Carrier 3" evidence="4">
    <location>
        <begin position="1237"/>
        <end position="1313"/>
    </location>
</feature>
<feature type="region of interest" description="Adenylation" evidence="2 3">
    <location>
        <begin position="63"/>
        <end position="468"/>
    </location>
</feature>
<feature type="region of interest" description="Condensation 1" evidence="2 3">
    <location>
        <begin position="712"/>
        <end position="1135"/>
    </location>
</feature>
<feature type="region of interest" description="Condensation 2" evidence="2 3">
    <location>
        <begin position="1354"/>
        <end position="1677"/>
    </location>
</feature>
<feature type="modified residue" description="O-(pantetheine 4'-phosphoryl)serine" evidence="4">
    <location>
        <position position="636"/>
    </location>
</feature>
<feature type="modified residue" description="O-(pantetheine 4'-phosphoryl)serine" evidence="4">
    <location>
        <position position="1203"/>
    </location>
</feature>
<feature type="modified residue" description="O-(pantetheine 4'-phosphoryl)serine" evidence="4">
    <location>
        <position position="1274"/>
    </location>
</feature>
<keyword id="KW-0436">Ligase</keyword>
<keyword id="KW-0511">Multifunctional enzyme</keyword>
<keyword id="KW-0596">Phosphopantetheine</keyword>
<keyword id="KW-0597">Phosphoprotein</keyword>
<organism>
    <name type="scientific">Cochliobolus miyabeanus</name>
    <name type="common">Brown spot disease fungus</name>
    <name type="synonym">Bipolaris oryzae</name>
    <dbReference type="NCBI Taxonomy" id="101162"/>
    <lineage>
        <taxon>Eukaryota</taxon>
        <taxon>Fungi</taxon>
        <taxon>Dikarya</taxon>
        <taxon>Ascomycota</taxon>
        <taxon>Pezizomycotina</taxon>
        <taxon>Dothideomycetes</taxon>
        <taxon>Pleosporomycetidae</taxon>
        <taxon>Pleosporales</taxon>
        <taxon>Pleosporineae</taxon>
        <taxon>Pleosporaceae</taxon>
        <taxon>Bipolaris</taxon>
    </lineage>
</organism>
<protein>
    <recommendedName>
        <fullName evidence="6">Nonribosomal peptide synthetase 6</fullName>
        <shortName evidence="6">NPRS 6</shortName>
        <ecNumber evidence="8">6.3.2.-</ecNumber>
    </recommendedName>
    <alternativeName>
        <fullName evidence="6">Extracellular siderophore synthetase</fullName>
    </alternativeName>
</protein>
<accession>Q09MP5</accession>
<sequence>MSRHQAVLQLHFFASILETLLKDVNHPLSHFDKVSEDELDELWSWNTPLQPELRFCMHEKVSERAALHPEKIAIDAWDGTLTYGQIEDYSDKLAKLLRLLDDSSNRIIPVLFEKSRWTSVAVLAIMKSGACFALLDPAQPEGRLRAVVQQVNAKIFLSSKAQSTLAARVAPAATIIPISKSKFNKIFSPYTAEQPNTTLPPVSPDQPLYIQFTSGSTGVPKGCILTHSQYTSGAIPRAAAVGYYPHSRVLDFASYAFDVCIDSMLCTLAHGATLCTPSDERRMNDMSGAMRDMRVTFAGMTPSVARTLDVDILNNLESIALGGEGVSISDAMSWGQRTRVVNAYGPSEATVGATINDNVAAKPYITMGQRKGCALWLTEPEDHNKLVPVGAVGELLIEGPIVGNGYLNNPSKTKEVFIEDPEFLIKGSKSYPGRHGRIYKTGDLVRFDPDGDGEPIFVGRQDQQVKLRGQRIELAEIEFNMQKHLPPDTQLAAEVIKPSGGGEQTLVAFLVEQKKNGMRHLDGNVFGSFTNKFQSALRDMTKQLFVDLPSYMVPSAYIPLWKMPLLVSCKTDRKRLREIGASVTRQDLRRFNSAVSEKKEATTEMELKLQSLWAKVLGGDADFSANDNFFSMGGDSLRAMRLVAAARDEAIVLSVPDIMLNPTLSAMAEKAKPVSAEETNEVPPFSMIGKDWDADAARRESARLCGVDAANVEDVYPCTPLQEGLIALSAKFQDAYVAQRVATLPAKTALRLKEAFDTAVEGSPVLRTRIVNVTGRGLFQVVLKDGQLVREHGTDTSEYLRRDRNEPMDLGTALFRYGLVKEPESDQMNFVITMHHAVYDGWSMPLVFDHVNSAFNGLHTERPTSFKHFIKHLTSLDPADAQQYWKKRLEGTSPHQFPPLPQKGYTTQADSLLEHYVTVPTSAHSKLTLATIIRGAWALVSSLYIGHPDIVFGETLTGRSAPVPGIEQIEGPMITTVPIRVRLSLDRPITEYLQMIHAVTVKQIPHEHLGLQNIRRLSKDARVACDLRTGLVLHPKEDEDWGKVSLETPANTFLPASDEEGAREALKFNTYALMLVCTLEENGFLVMASFDSNCISKEAMERVLVVLDRIVHAFLGNPESKLGDVAVLDPAEARDAEAMRPRDVMSDSALGMSPVDGLESMDASLKELSPNEEKLRNILGRILGMKETDIRPSDSFFDLGGDSIGAMRLVSDARAQGLNLTVAQVFQSRSLSDLAASASNEREDKLAEILSRILGIAKSDIKSSDSFFELGGDSIGAMRLVSDARAQGLSITVAQVFQSKSLAELASSAEEEMPSQPKTNVDAPFIALGKDANLHSPDRVGVYLENQEWEITNIYPTRPLQQLAVEGTVDLPRYSLRYELIKFATPIDRQKLEQACQELVARNEVLRTVFVKDNELTLGVVLSALRVPYTETAVPEGEDADAFIQAGIKQDIEAPKPYGSSFVAFNLFTHPNGASTLVFRISHAQYDEICLPILFEQLSALYSGTTVPETVPFSKHVNHVVLDNIPKAIPYWENLLSGSEMTVLKPTIPLTHRGPADIYREFDISSRPANITIGSLPTAAWALVLSRRLNLTDVVFGEVVSGRNVGAPNADRIFGPTWQYIPFRVPFSKSWSYLDLLRYVQDQHMTSAAYESMGFSEIVKNCTNWDEDKVQWFDTVVHQAPAWVEELPFGNGVEAKFQTLYPHGEPLREWKCQAFVKEGGRKLGIEIVTFEEWIGEAEGVLEEVGKALECLMEGRVGESIF</sequence>
<comment type="function">
    <text evidence="5">NRPS involved in extracellular coprogen-type siderophores biosynthesis including coprogen, neocoprogen I and neocoprogen II (PubMed:17056706). The role of extracellular siderophores in fungal virulence to plants is to supply iron to the fungus during plant infection, but not to act as phytotoxins, depriving their hosts of iron (PubMed:17056706).</text>
</comment>
<comment type="pathway">
    <text evidence="5">Siderophore biosynthesis.</text>
</comment>
<comment type="domain">
    <text evidence="1 8">NRP synthetases are composed of discrete domains (adenylation (A), thiolation (T) or peptidyl carrier protein (PCP) and condensation (C) domains) which when grouped together are referred to as a single module (By similarity). Each module is responsible for the recognition (via the A domain) and incorporation of a single amino acid into the growing peptide product (By similarity). Thus, an NRP synthetase is generally composed of one or more modules and can terminate in a thioesterase domain (TE) that releases the newly synthesized peptide from the enzyme (By similarity). Occasionally, methyltransferase domains (responsible for amino acid methylation) are present within the NRP synthetase (By similarity). NPS6 contains a degenerate A domain (dA) in the second module and has the following architecture: A-T-C-dA-T-T-C (PubMed:17056706).</text>
</comment>
<comment type="disruption phenotype">
    <text evidence="5">Leads to increased sensitivity to oxidative stress and reduces the virulence toward rice plants (PubMed:17056706).</text>
</comment>
<comment type="similarity">
    <text evidence="7">Belongs to the NRP synthetase family.</text>
</comment>
<dbReference type="EC" id="6.3.2.-" evidence="8"/>
<dbReference type="EMBL" id="DQ860090">
    <property type="protein sequence ID" value="ABI51982.1"/>
    <property type="molecule type" value="Genomic_DNA"/>
</dbReference>
<dbReference type="SMR" id="Q09MP5"/>
<dbReference type="PHI-base" id="PHI:1008"/>
<dbReference type="GO" id="GO:0005737">
    <property type="term" value="C:cytoplasm"/>
    <property type="evidence" value="ECO:0007669"/>
    <property type="project" value="TreeGrafter"/>
</dbReference>
<dbReference type="GO" id="GO:0016874">
    <property type="term" value="F:ligase activity"/>
    <property type="evidence" value="ECO:0007669"/>
    <property type="project" value="UniProtKB-KW"/>
</dbReference>
<dbReference type="GO" id="GO:0031177">
    <property type="term" value="F:phosphopantetheine binding"/>
    <property type="evidence" value="ECO:0007669"/>
    <property type="project" value="InterPro"/>
</dbReference>
<dbReference type="GO" id="GO:0043041">
    <property type="term" value="P:amino acid activation for nonribosomal peptide biosynthetic process"/>
    <property type="evidence" value="ECO:0007669"/>
    <property type="project" value="TreeGrafter"/>
</dbReference>
<dbReference type="GO" id="GO:0044550">
    <property type="term" value="P:secondary metabolite biosynthetic process"/>
    <property type="evidence" value="ECO:0007669"/>
    <property type="project" value="TreeGrafter"/>
</dbReference>
<dbReference type="CDD" id="cd05918">
    <property type="entry name" value="A_NRPS_SidN3_like"/>
    <property type="match status" value="1"/>
</dbReference>
<dbReference type="CDD" id="cd19542">
    <property type="entry name" value="CT_NRPS-like"/>
    <property type="match status" value="1"/>
</dbReference>
<dbReference type="CDD" id="cd19545">
    <property type="entry name" value="FUM14_C_NRPS-like"/>
    <property type="match status" value="1"/>
</dbReference>
<dbReference type="FunFam" id="3.30.300.30:FF:000015">
    <property type="entry name" value="Nonribosomal peptide synthase SidD"/>
    <property type="match status" value="1"/>
</dbReference>
<dbReference type="FunFam" id="3.30.559.30:FF:000003">
    <property type="entry name" value="Nonribosomal peptide synthase SidD"/>
    <property type="match status" value="1"/>
</dbReference>
<dbReference type="FunFam" id="1.10.1200.10:FF:000005">
    <property type="entry name" value="Nonribosomal peptide synthetase 1"/>
    <property type="match status" value="2"/>
</dbReference>
<dbReference type="FunFam" id="3.40.50.12780:FF:000014">
    <property type="entry name" value="Nonribosomal peptide synthetase 1"/>
    <property type="match status" value="1"/>
</dbReference>
<dbReference type="Gene3D" id="3.30.300.30">
    <property type="match status" value="1"/>
</dbReference>
<dbReference type="Gene3D" id="1.10.1200.10">
    <property type="entry name" value="ACP-like"/>
    <property type="match status" value="3"/>
</dbReference>
<dbReference type="Gene3D" id="3.30.559.10">
    <property type="entry name" value="Chloramphenicol acetyltransferase-like domain"/>
    <property type="match status" value="2"/>
</dbReference>
<dbReference type="Gene3D" id="3.40.50.12780">
    <property type="entry name" value="N-terminal domain of ligase-like"/>
    <property type="match status" value="1"/>
</dbReference>
<dbReference type="Gene3D" id="3.30.559.30">
    <property type="entry name" value="Nonribosomal peptide synthetase, condensation domain"/>
    <property type="match status" value="2"/>
</dbReference>
<dbReference type="InterPro" id="IPR036736">
    <property type="entry name" value="ACP-like_sf"/>
</dbReference>
<dbReference type="InterPro" id="IPR045851">
    <property type="entry name" value="AMP-bd_C_sf"/>
</dbReference>
<dbReference type="InterPro" id="IPR020845">
    <property type="entry name" value="AMP-binding_CS"/>
</dbReference>
<dbReference type="InterPro" id="IPR000873">
    <property type="entry name" value="AMP-dep_synth/lig_dom"/>
</dbReference>
<dbReference type="InterPro" id="IPR042099">
    <property type="entry name" value="ANL_N_sf"/>
</dbReference>
<dbReference type="InterPro" id="IPR023213">
    <property type="entry name" value="CAT-like_dom_sf"/>
</dbReference>
<dbReference type="InterPro" id="IPR001242">
    <property type="entry name" value="Condensatn"/>
</dbReference>
<dbReference type="InterPro" id="IPR020806">
    <property type="entry name" value="PKS_PP-bd"/>
</dbReference>
<dbReference type="InterPro" id="IPR009081">
    <property type="entry name" value="PP-bd_ACP"/>
</dbReference>
<dbReference type="InterPro" id="IPR006162">
    <property type="entry name" value="Ppantetheine_attach_site"/>
</dbReference>
<dbReference type="PANTHER" id="PTHR45527">
    <property type="entry name" value="NONRIBOSOMAL PEPTIDE SYNTHETASE"/>
    <property type="match status" value="1"/>
</dbReference>
<dbReference type="PANTHER" id="PTHR45527:SF3">
    <property type="entry name" value="SIDEROPHORE SYNTHETASE (EUROFUNG)"/>
    <property type="match status" value="1"/>
</dbReference>
<dbReference type="Pfam" id="PF00501">
    <property type="entry name" value="AMP-binding"/>
    <property type="match status" value="1"/>
</dbReference>
<dbReference type="Pfam" id="PF00668">
    <property type="entry name" value="Condensation"/>
    <property type="match status" value="2"/>
</dbReference>
<dbReference type="Pfam" id="PF00550">
    <property type="entry name" value="PP-binding"/>
    <property type="match status" value="3"/>
</dbReference>
<dbReference type="SMART" id="SM00823">
    <property type="entry name" value="PKS_PP"/>
    <property type="match status" value="3"/>
</dbReference>
<dbReference type="SMART" id="SM01294">
    <property type="entry name" value="PKS_PP_betabranch"/>
    <property type="match status" value="1"/>
</dbReference>
<dbReference type="SUPFAM" id="SSF56801">
    <property type="entry name" value="Acetyl-CoA synthetase-like"/>
    <property type="match status" value="1"/>
</dbReference>
<dbReference type="SUPFAM" id="SSF47336">
    <property type="entry name" value="ACP-like"/>
    <property type="match status" value="3"/>
</dbReference>
<dbReference type="SUPFAM" id="SSF52777">
    <property type="entry name" value="CoA-dependent acyltransferases"/>
    <property type="match status" value="4"/>
</dbReference>
<dbReference type="PROSITE" id="PS00455">
    <property type="entry name" value="AMP_BINDING"/>
    <property type="match status" value="1"/>
</dbReference>
<dbReference type="PROSITE" id="PS50075">
    <property type="entry name" value="CARRIER"/>
    <property type="match status" value="3"/>
</dbReference>
<dbReference type="PROSITE" id="PS00012">
    <property type="entry name" value="PHOSPHOPANTETHEINE"/>
    <property type="match status" value="3"/>
</dbReference>
<proteinExistence type="inferred from homology"/>
<name>NPS6_COCMI</name>
<gene>
    <name evidence="6" type="primary">NPS6</name>
</gene>
<evidence type="ECO:0000250" key="1">
    <source>
        <dbReference type="UniProtKB" id="A0A144KPJ6"/>
    </source>
</evidence>
<evidence type="ECO:0000250" key="2">
    <source>
        <dbReference type="UniProtKB" id="Q5D6D3"/>
    </source>
</evidence>
<evidence type="ECO:0000255" key="3"/>
<evidence type="ECO:0000255" key="4">
    <source>
        <dbReference type="PROSITE-ProRule" id="PRU00258"/>
    </source>
</evidence>
<evidence type="ECO:0000269" key="5">
    <source>
    </source>
</evidence>
<evidence type="ECO:0000303" key="6">
    <source>
    </source>
</evidence>
<evidence type="ECO:0000305" key="7"/>
<evidence type="ECO:0000305" key="8">
    <source>
    </source>
</evidence>
<reference key="1">
    <citation type="journal article" date="2006" name="Plant Cell">
        <title>NPS6, encoding a nonribosomal peptide synthetase involved in siderophore-mediated iron metabolism, is a conserved virulence determinant of plant pathogenic ascomycetes.</title>
        <authorList>
            <person name="Oide S."/>
            <person name="Moeder W."/>
            <person name="Krasnoff S."/>
            <person name="Gibson D."/>
            <person name="Haas H."/>
            <person name="Yoshioka K."/>
            <person name="Turgeon B.G."/>
        </authorList>
    </citation>
    <scope>NUCLEOTIDE SEQUENCE [GENOMIC DNA]</scope>
    <scope>FUNCTION</scope>
    <scope>DISRUPTION PHENOTYPE</scope>
    <scope>DOMAIN</scope>
    <scope>PATHWAY</scope>
    <source>
        <strain>WK-1C</strain>
    </source>
</reference>